<accession>Q03389</accession>
<reference key="1">
    <citation type="journal article" date="1992" name="J. Biol. Chem.">
        <title>Isolation and sequence of the cDNAs encoding the subunits of the isozyme form of wheat protein synthesis initiation factor 4F.</title>
        <authorList>
            <person name="Allen M.L."/>
            <person name="Metz A.M."/>
            <person name="Timmer R.T."/>
            <person name="Rhoads R.E."/>
            <person name="Browning K.S."/>
        </authorList>
    </citation>
    <scope>NUCLEOTIDE SEQUENCE [MRNA]</scope>
</reference>
<comment type="function">
    <text evidence="5">Component of the protein complex eIF4F, which is involved in the recognition of the mRNA cap, ATP-dependent unwinding of 5'-terminal secondary structure and recruitment of mRNA to the ribosome (By similarity). Recognizes and binds the 7-methylguanosine-containing mRNA cap during an early step in the initiation of protein synthesis and facilitates ribosome binding by inducing the unwinding of the mRNAs secondary structures (By similarity).</text>
</comment>
<comment type="subunit">
    <text evidence="2">EIF4F is a multi-subunit complex, the composition of which varies with external and internal environmental conditions. It is composed of at least EIF4A, EIF4E and EIF4G. EIF4E is also known to interact with other partners. In higher plants two isoforms of EIF4F have been identified, named isoform EIF4F and isoform EIF(iso)4F. Isoform EIF4F has subunits p220 and p26, whereas isoform EIF(iso)4F has subunits p82 and p28.</text>
</comment>
<comment type="interaction">
    <interactant intactId="EBI-1770460">
        <id>Q03389</id>
    </interactant>
    <interactant intactId="EBI-1770425">
        <id>O04663</id>
        <label>EIF(ISO)4E</label>
    </interactant>
    <organismsDiffer>true</organismsDiffer>
    <experiments>3</experiments>
</comment>
<comment type="subcellular location">
    <subcellularLocation>
        <location evidence="1">Cytoplasm</location>
    </subcellularLocation>
    <subcellularLocation>
        <location evidence="1">Nucleus</location>
    </subcellularLocation>
</comment>
<comment type="PTM">
    <text evidence="3">According to the redox status, the Cys-106-Cys-145 disulfide bridge may have a role in regulating protein function by affecting its ability to bind capped mRNA.</text>
</comment>
<comment type="similarity">
    <text evidence="7">Belongs to the eukaryotic initiation factor 4E family.</text>
</comment>
<organism>
    <name type="scientific">Triticum aestivum</name>
    <name type="common">Wheat</name>
    <dbReference type="NCBI Taxonomy" id="4565"/>
    <lineage>
        <taxon>Eukaryota</taxon>
        <taxon>Viridiplantae</taxon>
        <taxon>Streptophyta</taxon>
        <taxon>Embryophyta</taxon>
        <taxon>Tracheophyta</taxon>
        <taxon>Spermatophyta</taxon>
        <taxon>Magnoliopsida</taxon>
        <taxon>Liliopsida</taxon>
        <taxon>Poales</taxon>
        <taxon>Poaceae</taxon>
        <taxon>BOP clade</taxon>
        <taxon>Pooideae</taxon>
        <taxon>Triticodae</taxon>
        <taxon>Triticeae</taxon>
        <taxon>Triticinae</taxon>
        <taxon>Triticum</taxon>
    </lineage>
</organism>
<sequence length="209" mass="23522">MAEVEAALPVAATETPEVAAEGDAGAAEAKGPHKLQRQWTFWYDIQTKPKPGAAWGTSLKKGYTFDTVEEFWCLYDQIFRPSKLVGSADFHLFKAGVEPKWEDPECANGGKWTVISSRKTNLDTMWLETCMALIGEQFDESQEICGVVASVRQRQDKLSLWTKTASNEAVQVDIGKKWKEVIDYNDKMVYSFHDDSRSQKPSRGGRYTV</sequence>
<keyword id="KW-0963">Cytoplasm</keyword>
<keyword id="KW-1015">Disulfide bond</keyword>
<keyword id="KW-0396">Initiation factor</keyword>
<keyword id="KW-0539">Nucleus</keyword>
<keyword id="KW-0648">Protein biosynthesis</keyword>
<keyword id="KW-1185">Reference proteome</keyword>
<keyword id="KW-0694">RNA-binding</keyword>
<keyword id="KW-0810">Translation regulation</keyword>
<evidence type="ECO:0000250" key="1">
    <source>
        <dbReference type="UniProtKB" id="A0A445AGS0"/>
    </source>
</evidence>
<evidence type="ECO:0000250" key="2">
    <source>
        <dbReference type="UniProtKB" id="O04663"/>
    </source>
</evidence>
<evidence type="ECO:0000250" key="3">
    <source>
        <dbReference type="UniProtKB" id="P29557"/>
    </source>
</evidence>
<evidence type="ECO:0000250" key="4">
    <source>
        <dbReference type="UniProtKB" id="Q00LS8"/>
    </source>
</evidence>
<evidence type="ECO:0000250" key="5">
    <source>
        <dbReference type="UniProtKB" id="Q66WU1"/>
    </source>
</evidence>
<evidence type="ECO:0000256" key="6">
    <source>
        <dbReference type="SAM" id="MobiDB-lite"/>
    </source>
</evidence>
<evidence type="ECO:0000305" key="7"/>
<feature type="chain" id="PRO_0000193663" description="Eukaryotic translation initiation factor isoform 4E-2">
    <location>
        <begin position="1"/>
        <end position="209"/>
    </location>
</feature>
<feature type="region of interest" description="Disordered" evidence="6">
    <location>
        <begin position="1"/>
        <end position="29"/>
    </location>
</feature>
<feature type="compositionally biased region" description="Low complexity" evidence="6">
    <location>
        <begin position="9"/>
        <end position="29"/>
    </location>
</feature>
<feature type="binding site" evidence="3">
    <location>
        <begin position="51"/>
        <end position="56"/>
    </location>
    <ligand>
        <name>mRNA</name>
        <dbReference type="ChEBI" id="CHEBI:33699"/>
    </ligand>
    <ligandPart>
        <name>N(7)-methylguanosine 5'-triphosphate group</name>
        <dbReference type="ChEBI" id="CHEBI:74429"/>
        <note>m7GTP residue in mRNA cap</note>
    </ligandPart>
</feature>
<feature type="binding site" evidence="3">
    <location>
        <position position="83"/>
    </location>
    <ligand>
        <name>mRNA</name>
        <dbReference type="ChEBI" id="CHEBI:33699"/>
    </ligand>
    <ligandPart>
        <name>N(7)-methylguanosine 5'-triphosphate group</name>
        <dbReference type="ChEBI" id="CHEBI:74429"/>
        <note>m7GTP residue in mRNA cap</note>
    </ligandPart>
</feature>
<feature type="binding site" evidence="3">
    <location>
        <begin position="101"/>
        <end position="102"/>
    </location>
    <ligand>
        <name>mRNA</name>
        <dbReference type="ChEBI" id="CHEBI:33699"/>
    </ligand>
    <ligandPart>
        <name>N(7)-methylguanosine 5'-triphosphate group</name>
        <dbReference type="ChEBI" id="CHEBI:74429"/>
        <note>m7GTP residue in mRNA cap</note>
    </ligandPart>
</feature>
<feature type="binding site" evidence="3">
    <location>
        <begin position="152"/>
        <end position="157"/>
    </location>
    <ligand>
        <name>mRNA</name>
        <dbReference type="ChEBI" id="CHEBI:33699"/>
    </ligand>
    <ligandPart>
        <name>N(7)-methylguanosine 5'-triphosphate group</name>
        <dbReference type="ChEBI" id="CHEBI:74429"/>
        <note>m7GTP residue in mRNA cap</note>
    </ligandPart>
</feature>
<feature type="binding site" evidence="4">
    <location>
        <begin position="197"/>
        <end position="200"/>
    </location>
    <ligand>
        <name>mRNA</name>
        <dbReference type="ChEBI" id="CHEBI:33699"/>
    </ligand>
    <ligandPart>
        <name>N(7)-methylguanosine 5'-triphosphate group</name>
        <dbReference type="ChEBI" id="CHEBI:74429"/>
        <note>m7GTP residue in mRNA cap</note>
    </ligandPart>
</feature>
<feature type="disulfide bond" evidence="3">
    <location>
        <begin position="106"/>
        <end position="145"/>
    </location>
</feature>
<feature type="sequence variant">
    <original>G</original>
    <variation>S</variation>
    <location>
        <position position="22"/>
    </location>
</feature>
<proteinExistence type="evidence at protein level"/>
<name>IF4E2_WHEAT</name>
<protein>
    <recommendedName>
        <fullName>Eukaryotic translation initiation factor isoform 4E-2</fullName>
        <shortName>eIF(iso)-4E-2</shortName>
        <shortName>eIF(iso)4E-2</shortName>
    </recommendedName>
    <alternativeName>
        <fullName>eIF-(iso)4F 25 kDa subunit</fullName>
    </alternativeName>
    <alternativeName>
        <fullName>eIF-(iso)4F p28 subunit</fullName>
    </alternativeName>
    <alternativeName>
        <fullName>mRNA cap-binding protein</fullName>
    </alternativeName>
</protein>
<dbReference type="EMBL" id="M95818">
    <property type="protein sequence ID" value="AAA34295.1"/>
    <property type="molecule type" value="mRNA"/>
</dbReference>
<dbReference type="EMBL" id="M95819">
    <property type="protein sequence ID" value="AAA34296.1"/>
    <property type="molecule type" value="mRNA"/>
</dbReference>
<dbReference type="RefSeq" id="NP_001414920.1">
    <property type="nucleotide sequence ID" value="NM_001427991.1"/>
</dbReference>
<dbReference type="SMR" id="Q03389"/>
<dbReference type="IntAct" id="Q03389">
    <property type="interactions" value="2"/>
</dbReference>
<dbReference type="STRING" id="4565.Q03389"/>
<dbReference type="PaxDb" id="4565-Traes_1BL_7103BF3C6.1"/>
<dbReference type="EnsemblPlants" id="TraesARI1D03G00474110.1">
    <property type="protein sequence ID" value="TraesARI1D03G00474110.1"/>
    <property type="gene ID" value="TraesARI1D03G00474110"/>
</dbReference>
<dbReference type="EnsemblPlants" id="TraesCAD_scaffold_020754_01G000300.1">
    <property type="protein sequence ID" value="TraesCAD_scaffold_020754_01G000300.1"/>
    <property type="gene ID" value="TraesCAD_scaffold_020754_01G000300"/>
</dbReference>
<dbReference type="EnsemblPlants" id="TraesCLE_scaffold_070407_01G000200.1">
    <property type="protein sequence ID" value="TraesCLE_scaffold_070407_01G000200.1"/>
    <property type="gene ID" value="TraesCLE_scaffold_070407_01G000200"/>
</dbReference>
<dbReference type="EnsemblPlants" id="TraesCS1D02G146500.1">
    <property type="protein sequence ID" value="TraesCS1D02G146500.1"/>
    <property type="gene ID" value="TraesCS1D02G146500"/>
</dbReference>
<dbReference type="EnsemblPlants" id="TraesCS1D03G0370900.1">
    <property type="protein sequence ID" value="TraesCS1D03G0370900.1.CDS"/>
    <property type="gene ID" value="TraesCS1D03G0370900"/>
</dbReference>
<dbReference type="EnsemblPlants" id="TraesJAG1D03G00468060.1">
    <property type="protein sequence ID" value="TraesJAG1D03G00468060.1"/>
    <property type="gene ID" value="TraesJAG1D03G00468060"/>
</dbReference>
<dbReference type="EnsemblPlants" id="TraesJUL1D03G00471410.1">
    <property type="protein sequence ID" value="TraesJUL1D03G00471410.1"/>
    <property type="gene ID" value="TraesJUL1D03G00471410"/>
</dbReference>
<dbReference type="EnsemblPlants" id="TraesKAR1D01G0147480.1">
    <property type="protein sequence ID" value="cds.TraesKAR1D01G0147480.1"/>
    <property type="gene ID" value="TraesKAR1D01G0147480"/>
</dbReference>
<dbReference type="EnsemblPlants" id="TraesLAC1D03G00472160.1">
    <property type="protein sequence ID" value="TraesLAC1D03G00472160.1"/>
    <property type="gene ID" value="TraesLAC1D03G00472160"/>
</dbReference>
<dbReference type="EnsemblPlants" id="TraesLDM1D03G00471230.1">
    <property type="protein sequence ID" value="TraesLDM1D03G00471230.1"/>
    <property type="gene ID" value="TraesLDM1D03G00471230"/>
</dbReference>
<dbReference type="EnsemblPlants" id="TraesMAC1D03G00468140.1">
    <property type="protein sequence ID" value="TraesMAC1D03G00468140.1"/>
    <property type="gene ID" value="TraesMAC1D03G00468140"/>
</dbReference>
<dbReference type="EnsemblPlants" id="TraesNOR1D03G00476010.1">
    <property type="protein sequence ID" value="TraesNOR1D03G00476010.1"/>
    <property type="gene ID" value="TraesNOR1D03G00476010"/>
</dbReference>
<dbReference type="EnsemblPlants" id="TraesPARA_EIv1.0_0263770.1">
    <property type="protein sequence ID" value="TraesPARA_EIv1.0_0263770.1.CDS"/>
    <property type="gene ID" value="TraesPARA_EIv1.0_0263770"/>
</dbReference>
<dbReference type="EnsemblPlants" id="TraesRN1A0100439500.1">
    <property type="protein sequence ID" value="TraesRN1A0100439500.1"/>
    <property type="gene ID" value="TraesRN1A0100439500"/>
</dbReference>
<dbReference type="EnsemblPlants" id="TraesROB_scaffold_066899_01G000300.1">
    <property type="protein sequence ID" value="TraesROB_scaffold_066899_01G000300.1"/>
    <property type="gene ID" value="TraesROB_scaffold_066899_01G000300"/>
</dbReference>
<dbReference type="EnsemblPlants" id="TraesSTA1D03G00467400.1">
    <property type="protein sequence ID" value="TraesSTA1D03G00467400.1"/>
    <property type="gene ID" value="TraesSTA1D03G00467400"/>
</dbReference>
<dbReference type="EnsemblPlants" id="TraesSYM1D03G00475060.1">
    <property type="protein sequence ID" value="TraesSYM1D03G00475060.1"/>
    <property type="gene ID" value="TraesSYM1D03G00475060"/>
</dbReference>
<dbReference type="EnsemblPlants" id="TraesWEE_scaffold_070878_01G000200.1">
    <property type="protein sequence ID" value="TraesWEE_scaffold_070878_01G000200.1"/>
    <property type="gene ID" value="TraesWEE_scaffold_070878_01G000200"/>
</dbReference>
<dbReference type="GeneID" id="543468"/>
<dbReference type="Gramene" id="TraesARI1D03G00474110.1">
    <property type="protein sequence ID" value="TraesARI1D03G00474110.1"/>
    <property type="gene ID" value="TraesARI1D03G00474110"/>
</dbReference>
<dbReference type="Gramene" id="TraesCAD_scaffold_020754_01G000300.1">
    <property type="protein sequence ID" value="TraesCAD_scaffold_020754_01G000300.1"/>
    <property type="gene ID" value="TraesCAD_scaffold_020754_01G000300"/>
</dbReference>
<dbReference type="Gramene" id="TraesCLE_scaffold_070407_01G000200.1">
    <property type="protein sequence ID" value="TraesCLE_scaffold_070407_01G000200.1"/>
    <property type="gene ID" value="TraesCLE_scaffold_070407_01G000200"/>
</dbReference>
<dbReference type="Gramene" id="TraesCS1D02G146500.1">
    <property type="protein sequence ID" value="TraesCS1D02G146500.1"/>
    <property type="gene ID" value="TraesCS1D02G146500"/>
</dbReference>
<dbReference type="Gramene" id="TraesCS1D03G0370900.1">
    <property type="protein sequence ID" value="TraesCS1D03G0370900.1.CDS"/>
    <property type="gene ID" value="TraesCS1D03G0370900"/>
</dbReference>
<dbReference type="Gramene" id="TraesJAG1D03G00468060.1">
    <property type="protein sequence ID" value="TraesJAG1D03G00468060.1"/>
    <property type="gene ID" value="TraesJAG1D03G00468060"/>
</dbReference>
<dbReference type="Gramene" id="TraesJUL1D03G00471410.1">
    <property type="protein sequence ID" value="TraesJUL1D03G00471410.1"/>
    <property type="gene ID" value="TraesJUL1D03G00471410"/>
</dbReference>
<dbReference type="Gramene" id="TraesKAR1D01G0147480.1">
    <property type="protein sequence ID" value="cds.TraesKAR1D01G0147480.1"/>
    <property type="gene ID" value="TraesKAR1D01G0147480"/>
</dbReference>
<dbReference type="Gramene" id="TraesLAC1D03G00472160.1">
    <property type="protein sequence ID" value="TraesLAC1D03G00472160.1"/>
    <property type="gene ID" value="TraesLAC1D03G00472160"/>
</dbReference>
<dbReference type="Gramene" id="TraesLDM1D03G00471230.1">
    <property type="protein sequence ID" value="TraesLDM1D03G00471230.1"/>
    <property type="gene ID" value="TraesLDM1D03G00471230"/>
</dbReference>
<dbReference type="Gramene" id="TraesMAC1D03G00468140.1">
    <property type="protein sequence ID" value="TraesMAC1D03G00468140.1"/>
    <property type="gene ID" value="TraesMAC1D03G00468140"/>
</dbReference>
<dbReference type="Gramene" id="TraesNOR1D03G00476010.1">
    <property type="protein sequence ID" value="TraesNOR1D03G00476010.1"/>
    <property type="gene ID" value="TraesNOR1D03G00476010"/>
</dbReference>
<dbReference type="Gramene" id="TraesPARA_EIv1.0_0263770.1">
    <property type="protein sequence ID" value="TraesPARA_EIv1.0_0263770.1.CDS"/>
    <property type="gene ID" value="TraesPARA_EIv1.0_0263770"/>
</dbReference>
<dbReference type="Gramene" id="TraesRN1A0100439500.1">
    <property type="protein sequence ID" value="TraesRN1A0100439500.1"/>
    <property type="gene ID" value="TraesRN1A0100439500"/>
</dbReference>
<dbReference type="Gramene" id="TraesROB_scaffold_066899_01G000300.1">
    <property type="protein sequence ID" value="TraesROB_scaffold_066899_01G000300.1"/>
    <property type="gene ID" value="TraesROB_scaffold_066899_01G000300"/>
</dbReference>
<dbReference type="Gramene" id="TraesSTA1D03G00467400.1">
    <property type="protein sequence ID" value="TraesSTA1D03G00467400.1"/>
    <property type="gene ID" value="TraesSTA1D03G00467400"/>
</dbReference>
<dbReference type="Gramene" id="TraesSYM1D03G00475060.1">
    <property type="protein sequence ID" value="TraesSYM1D03G00475060.1"/>
    <property type="gene ID" value="TraesSYM1D03G00475060"/>
</dbReference>
<dbReference type="Gramene" id="TraesWEE_scaffold_070878_01G000200.1">
    <property type="protein sequence ID" value="TraesWEE_scaffold_070878_01G000200.1"/>
    <property type="gene ID" value="TraesWEE_scaffold_070878_01G000200"/>
</dbReference>
<dbReference type="eggNOG" id="KOG1670">
    <property type="taxonomic scope" value="Eukaryota"/>
</dbReference>
<dbReference type="OMA" id="CTKEKRI"/>
<dbReference type="OrthoDB" id="590761at2759"/>
<dbReference type="Proteomes" id="UP000019116">
    <property type="component" value="Chromosome 1D"/>
</dbReference>
<dbReference type="GO" id="GO:0016281">
    <property type="term" value="C:eukaryotic translation initiation factor 4F complex"/>
    <property type="evidence" value="ECO:0000318"/>
    <property type="project" value="GO_Central"/>
</dbReference>
<dbReference type="GO" id="GO:0005634">
    <property type="term" value="C:nucleus"/>
    <property type="evidence" value="ECO:0007669"/>
    <property type="project" value="UniProtKB-SubCell"/>
</dbReference>
<dbReference type="GO" id="GO:0000340">
    <property type="term" value="F:RNA 7-methylguanosine cap binding"/>
    <property type="evidence" value="ECO:0000318"/>
    <property type="project" value="GO_Central"/>
</dbReference>
<dbReference type="GO" id="GO:0003743">
    <property type="term" value="F:translation initiation factor activity"/>
    <property type="evidence" value="ECO:0000318"/>
    <property type="project" value="GO_Central"/>
</dbReference>
<dbReference type="GO" id="GO:0006417">
    <property type="term" value="P:regulation of translation"/>
    <property type="evidence" value="ECO:0007669"/>
    <property type="project" value="UniProtKB-KW"/>
</dbReference>
<dbReference type="GO" id="GO:0006413">
    <property type="term" value="P:translational initiation"/>
    <property type="evidence" value="ECO:0000318"/>
    <property type="project" value="GO_Central"/>
</dbReference>
<dbReference type="FunFam" id="3.30.760.10:FF:000003">
    <property type="entry name" value="Eukaryotic translation initiation factor 4E"/>
    <property type="match status" value="1"/>
</dbReference>
<dbReference type="Gene3D" id="3.30.760.10">
    <property type="entry name" value="RNA Cap, Translation Initiation Factor Eif4e"/>
    <property type="match status" value="1"/>
</dbReference>
<dbReference type="InterPro" id="IPR023398">
    <property type="entry name" value="TIF_eIF4e-like"/>
</dbReference>
<dbReference type="InterPro" id="IPR001040">
    <property type="entry name" value="TIF_eIF_4E"/>
</dbReference>
<dbReference type="InterPro" id="IPR019770">
    <property type="entry name" value="TIF_eIF_4E_CS"/>
</dbReference>
<dbReference type="PANTHER" id="PTHR11960">
    <property type="entry name" value="EUKARYOTIC TRANSLATION INITIATION FACTOR 4E RELATED"/>
    <property type="match status" value="1"/>
</dbReference>
<dbReference type="PANTHER" id="PTHR11960:SF60">
    <property type="entry name" value="EUKARYOTIC TRANSLATION INITIATION FACTOR ISOFORM 4E-2"/>
    <property type="match status" value="1"/>
</dbReference>
<dbReference type="Pfam" id="PF01652">
    <property type="entry name" value="IF4E"/>
    <property type="match status" value="1"/>
</dbReference>
<dbReference type="SUPFAM" id="SSF55418">
    <property type="entry name" value="eIF4e-like"/>
    <property type="match status" value="1"/>
</dbReference>
<dbReference type="PROSITE" id="PS00813">
    <property type="entry name" value="IF4E"/>
    <property type="match status" value="1"/>
</dbReference>